<reference key="1">
    <citation type="journal article" date="1997" name="J. Comp. Neurol.">
        <title>Png-1, a nervous system-specific zinc finger gene, identifies regions containing postmitotic neurons during mammalian embryonic development.</title>
        <authorList>
            <person name="Weiner J.A."/>
            <person name="Chun J."/>
        </authorList>
    </citation>
    <scope>NUCLEOTIDE SEQUENCE [MRNA] (ISOFORM 1)</scope>
    <scope>FUNCTION</scope>
    <scope>TISSUE SPECIFICITY</scope>
    <scope>INDUCTION</scope>
    <scope>DEVELOPMENTAL STAGE</scope>
    <source>
        <strain>BALB/cJ</strain>
        <tissue>Brain</tissue>
    </source>
</reference>
<reference key="2">
    <citation type="journal article" date="1997" name="J. Neurosci. Res.">
        <title>Myelin transcription factor 1 (Myt1) of the oligodendrocyte lineage, along with a closely related CCHC zinc finger, is expressed in developing neurons in the mammalian central nervous system.</title>
        <authorList>
            <person name="Kim J.G."/>
            <person name="Armstrong R.C."/>
            <person name="Agoston D.V."/>
            <person name="Robinsky A."/>
            <person name="Wiese C."/>
            <person name="Nagle J."/>
            <person name="Hudson L.D."/>
        </authorList>
    </citation>
    <scope>NUCLEOTIDE SEQUENCE [MRNA] (ISOFORM 2)</scope>
    <scope>FUNCTION</scope>
    <scope>SUBCELLULAR LOCATION</scope>
</reference>
<reference key="3">
    <citation type="journal article" date="2011" name="Neurosci. Lett.">
        <title>Myt/NZF family transcription factors regulate neuronal differentiation of P19 cells.</title>
        <authorList>
            <person name="Kameyama T."/>
            <person name="Matsushita F."/>
            <person name="Kadokawa Y."/>
            <person name="Marunouchi T."/>
        </authorList>
    </citation>
    <scope>NUCLEOTIDE SEQUENCE [MRNA]</scope>
    <source>
        <strain>ICR</strain>
        <tissue>Brain</tissue>
    </source>
</reference>
<reference key="4">
    <citation type="journal article" date="2005" name="Science">
        <title>The transcriptional landscape of the mammalian genome.</title>
        <authorList>
            <person name="Carninci P."/>
            <person name="Kasukawa T."/>
            <person name="Katayama S."/>
            <person name="Gough J."/>
            <person name="Frith M.C."/>
            <person name="Maeda N."/>
            <person name="Oyama R."/>
            <person name="Ravasi T."/>
            <person name="Lenhard B."/>
            <person name="Wells C."/>
            <person name="Kodzius R."/>
            <person name="Shimokawa K."/>
            <person name="Bajic V.B."/>
            <person name="Brenner S.E."/>
            <person name="Batalov S."/>
            <person name="Forrest A.R."/>
            <person name="Zavolan M."/>
            <person name="Davis M.J."/>
            <person name="Wilming L.G."/>
            <person name="Aidinis V."/>
            <person name="Allen J.E."/>
            <person name="Ambesi-Impiombato A."/>
            <person name="Apweiler R."/>
            <person name="Aturaliya R.N."/>
            <person name="Bailey T.L."/>
            <person name="Bansal M."/>
            <person name="Baxter L."/>
            <person name="Beisel K.W."/>
            <person name="Bersano T."/>
            <person name="Bono H."/>
            <person name="Chalk A.M."/>
            <person name="Chiu K.P."/>
            <person name="Choudhary V."/>
            <person name="Christoffels A."/>
            <person name="Clutterbuck D.R."/>
            <person name="Crowe M.L."/>
            <person name="Dalla E."/>
            <person name="Dalrymple B.P."/>
            <person name="de Bono B."/>
            <person name="Della Gatta G."/>
            <person name="di Bernardo D."/>
            <person name="Down T."/>
            <person name="Engstrom P."/>
            <person name="Fagiolini M."/>
            <person name="Faulkner G."/>
            <person name="Fletcher C.F."/>
            <person name="Fukushima T."/>
            <person name="Furuno M."/>
            <person name="Futaki S."/>
            <person name="Gariboldi M."/>
            <person name="Georgii-Hemming P."/>
            <person name="Gingeras T.R."/>
            <person name="Gojobori T."/>
            <person name="Green R.E."/>
            <person name="Gustincich S."/>
            <person name="Harbers M."/>
            <person name="Hayashi Y."/>
            <person name="Hensch T.K."/>
            <person name="Hirokawa N."/>
            <person name="Hill D."/>
            <person name="Huminiecki L."/>
            <person name="Iacono M."/>
            <person name="Ikeo K."/>
            <person name="Iwama A."/>
            <person name="Ishikawa T."/>
            <person name="Jakt M."/>
            <person name="Kanapin A."/>
            <person name="Katoh M."/>
            <person name="Kawasawa Y."/>
            <person name="Kelso J."/>
            <person name="Kitamura H."/>
            <person name="Kitano H."/>
            <person name="Kollias G."/>
            <person name="Krishnan S.P."/>
            <person name="Kruger A."/>
            <person name="Kummerfeld S.K."/>
            <person name="Kurochkin I.V."/>
            <person name="Lareau L.F."/>
            <person name="Lazarevic D."/>
            <person name="Lipovich L."/>
            <person name="Liu J."/>
            <person name="Liuni S."/>
            <person name="McWilliam S."/>
            <person name="Madan Babu M."/>
            <person name="Madera M."/>
            <person name="Marchionni L."/>
            <person name="Matsuda H."/>
            <person name="Matsuzawa S."/>
            <person name="Miki H."/>
            <person name="Mignone F."/>
            <person name="Miyake S."/>
            <person name="Morris K."/>
            <person name="Mottagui-Tabar S."/>
            <person name="Mulder N."/>
            <person name="Nakano N."/>
            <person name="Nakauchi H."/>
            <person name="Ng P."/>
            <person name="Nilsson R."/>
            <person name="Nishiguchi S."/>
            <person name="Nishikawa S."/>
            <person name="Nori F."/>
            <person name="Ohara O."/>
            <person name="Okazaki Y."/>
            <person name="Orlando V."/>
            <person name="Pang K.C."/>
            <person name="Pavan W.J."/>
            <person name="Pavesi G."/>
            <person name="Pesole G."/>
            <person name="Petrovsky N."/>
            <person name="Piazza S."/>
            <person name="Reed J."/>
            <person name="Reid J.F."/>
            <person name="Ring B.Z."/>
            <person name="Ringwald M."/>
            <person name="Rost B."/>
            <person name="Ruan Y."/>
            <person name="Salzberg S.L."/>
            <person name="Sandelin A."/>
            <person name="Schneider C."/>
            <person name="Schoenbach C."/>
            <person name="Sekiguchi K."/>
            <person name="Semple C.A."/>
            <person name="Seno S."/>
            <person name="Sessa L."/>
            <person name="Sheng Y."/>
            <person name="Shibata Y."/>
            <person name="Shimada H."/>
            <person name="Shimada K."/>
            <person name="Silva D."/>
            <person name="Sinclair B."/>
            <person name="Sperling S."/>
            <person name="Stupka E."/>
            <person name="Sugiura K."/>
            <person name="Sultana R."/>
            <person name="Takenaka Y."/>
            <person name="Taki K."/>
            <person name="Tammoja K."/>
            <person name="Tan S.L."/>
            <person name="Tang S."/>
            <person name="Taylor M.S."/>
            <person name="Tegner J."/>
            <person name="Teichmann S.A."/>
            <person name="Ueda H.R."/>
            <person name="van Nimwegen E."/>
            <person name="Verardo R."/>
            <person name="Wei C.L."/>
            <person name="Yagi K."/>
            <person name="Yamanishi H."/>
            <person name="Zabarovsky E."/>
            <person name="Zhu S."/>
            <person name="Zimmer A."/>
            <person name="Hide W."/>
            <person name="Bult C."/>
            <person name="Grimmond S.M."/>
            <person name="Teasdale R.D."/>
            <person name="Liu E.T."/>
            <person name="Brusic V."/>
            <person name="Quackenbush J."/>
            <person name="Wahlestedt C."/>
            <person name="Mattick J.S."/>
            <person name="Hume D.A."/>
            <person name="Kai C."/>
            <person name="Sasaki D."/>
            <person name="Tomaru Y."/>
            <person name="Fukuda S."/>
            <person name="Kanamori-Katayama M."/>
            <person name="Suzuki M."/>
            <person name="Aoki J."/>
            <person name="Arakawa T."/>
            <person name="Iida J."/>
            <person name="Imamura K."/>
            <person name="Itoh M."/>
            <person name="Kato T."/>
            <person name="Kawaji H."/>
            <person name="Kawagashira N."/>
            <person name="Kawashima T."/>
            <person name="Kojima M."/>
            <person name="Kondo S."/>
            <person name="Konno H."/>
            <person name="Nakano K."/>
            <person name="Ninomiya N."/>
            <person name="Nishio T."/>
            <person name="Okada M."/>
            <person name="Plessy C."/>
            <person name="Shibata K."/>
            <person name="Shiraki T."/>
            <person name="Suzuki S."/>
            <person name="Tagami M."/>
            <person name="Waki K."/>
            <person name="Watahiki A."/>
            <person name="Okamura-Oho Y."/>
            <person name="Suzuki H."/>
            <person name="Kawai J."/>
            <person name="Hayashizaki Y."/>
        </authorList>
    </citation>
    <scope>NUCLEOTIDE SEQUENCE [LARGE SCALE MRNA] (ISOFORMS 3 AND 4)</scope>
    <source>
        <strain>C57BL/6J</strain>
        <tissue>Hippocampus</tissue>
        <tissue>Testis</tissue>
    </source>
</reference>
<reference key="5">
    <citation type="journal article" date="2002" name="DNA Res.">
        <title>Prediction of the coding sequences of mouse homologues of KIAA gene: I. The complete nucleotide sequences of 100 mouse KIAA-homologous cDNAs identified by screening of terminal sequences of cDNA clones randomly sampled from size-fractionated libraries.</title>
        <authorList>
            <person name="Okazaki N."/>
            <person name="Kikuno R."/>
            <person name="Ohara R."/>
            <person name="Inamoto S."/>
            <person name="Hara Y."/>
            <person name="Nagase T."/>
            <person name="Ohara O."/>
            <person name="Koga H."/>
        </authorList>
    </citation>
    <scope>NUCLEOTIDE SEQUENCE [LARGE SCALE MRNA] (ISOFORM 2)</scope>
    <source>
        <tissue>Brain</tissue>
    </source>
</reference>
<reference key="6">
    <citation type="journal article" date="2009" name="PLoS Biol.">
        <title>Lineage-specific biology revealed by a finished genome assembly of the mouse.</title>
        <authorList>
            <person name="Church D.M."/>
            <person name="Goodstadt L."/>
            <person name="Hillier L.W."/>
            <person name="Zody M.C."/>
            <person name="Goldstein S."/>
            <person name="She X."/>
            <person name="Bult C.J."/>
            <person name="Agarwala R."/>
            <person name="Cherry J.L."/>
            <person name="DiCuccio M."/>
            <person name="Hlavina W."/>
            <person name="Kapustin Y."/>
            <person name="Meric P."/>
            <person name="Maglott D."/>
            <person name="Birtle Z."/>
            <person name="Marques A.C."/>
            <person name="Graves T."/>
            <person name="Zhou S."/>
            <person name="Teague B."/>
            <person name="Potamousis K."/>
            <person name="Churas C."/>
            <person name="Place M."/>
            <person name="Herschleb J."/>
            <person name="Runnheim R."/>
            <person name="Forrest D."/>
            <person name="Amos-Landgraf J."/>
            <person name="Schwartz D.C."/>
            <person name="Cheng Z."/>
            <person name="Lindblad-Toh K."/>
            <person name="Eichler E.E."/>
            <person name="Ponting C.P."/>
        </authorList>
    </citation>
    <scope>NUCLEOTIDE SEQUENCE [LARGE SCALE GENOMIC DNA]</scope>
    <source>
        <strain>C57BL/6J</strain>
    </source>
</reference>
<reference key="7">
    <citation type="journal article" date="2004" name="Genome Res.">
        <title>The status, quality, and expansion of the NIH full-length cDNA project: the Mammalian Gene Collection (MGC).</title>
        <authorList>
            <consortium name="The MGC Project Team"/>
        </authorList>
    </citation>
    <scope>NUCLEOTIDE SEQUENCE [LARGE SCALE MRNA] (ISOFORM 2)</scope>
</reference>
<reference key="8">
    <citation type="journal article" date="2010" name="Cell">
        <title>A tissue-specific atlas of mouse protein phosphorylation and expression.</title>
        <authorList>
            <person name="Huttlin E.L."/>
            <person name="Jedrychowski M.P."/>
            <person name="Elias J.E."/>
            <person name="Goswami T."/>
            <person name="Rad R."/>
            <person name="Beausoleil S.A."/>
            <person name="Villen J."/>
            <person name="Haas W."/>
            <person name="Sowa M.E."/>
            <person name="Gygi S.P."/>
        </authorList>
    </citation>
    <scope>PHOSPHORYLATION [LARGE SCALE ANALYSIS] AT SER-251</scope>
    <scope>IDENTIFICATION BY MASS SPECTROMETRY [LARGE SCALE ANALYSIS]</scope>
    <source>
        <tissue>Brain</tissue>
    </source>
</reference>
<reference key="9">
    <citation type="journal article" date="2010" name="Nature">
        <title>Direct conversion of fibroblasts to functional neurons by defined factors.</title>
        <authorList>
            <person name="Vierbuchen T."/>
            <person name="Ostermeier A."/>
            <person name="Pang Z.P."/>
            <person name="Kokubu Y."/>
            <person name="Suedhof T.C."/>
            <person name="Wernig M."/>
        </authorList>
    </citation>
    <scope>FUNCTION</scope>
</reference>
<reference key="10">
    <citation type="journal article" date="2013" name="Cell">
        <title>Hierarchical mechanisms for direct reprogramming of fibroblasts to neurons.</title>
        <authorList>
            <person name="Wapinski O.L."/>
            <person name="Vierbuchen T."/>
            <person name="Qu K."/>
            <person name="Lee Q.Y."/>
            <person name="Chanda S."/>
            <person name="Fuentes D.R."/>
            <person name="Giresi P.G."/>
            <person name="Ng Y.H."/>
            <person name="Marro S."/>
            <person name="Neff N.F."/>
            <person name="Drechsel D."/>
            <person name="Martynoga B."/>
            <person name="Castro D.S."/>
            <person name="Webb A.E."/>
            <person name="Suedhof T.C."/>
            <person name="Brunet A."/>
            <person name="Guillemot F."/>
            <person name="Chang H.Y."/>
            <person name="Wernig M."/>
        </authorList>
    </citation>
    <scope>FUNCTION</scope>
    <scope>SUBCELLULAR LOCATION</scope>
</reference>
<reference key="11">
    <citation type="journal article" date="2016" name="Nature">
        <title>Dissecting direct reprogramming from fibroblast to neuron using single-cell RNA-seq.</title>
        <authorList>
            <person name="Treutlein B."/>
            <person name="Lee Q.Y."/>
            <person name="Camp J.G."/>
            <person name="Mall M."/>
            <person name="Koh W."/>
            <person name="Shariati S.A."/>
            <person name="Sim S."/>
            <person name="Neff N.F."/>
            <person name="Skotheim J.M."/>
            <person name="Wernig M."/>
            <person name="Quake S.R."/>
        </authorList>
    </citation>
    <scope>FUNCTION</scope>
</reference>
<reference key="12">
    <citation type="journal article" date="2017" name="Nature">
        <title>Myt1l safeguards neuronal identity by actively repressing many non-neuronal fates.</title>
        <authorList>
            <person name="Mall M."/>
            <person name="Kareta M.S."/>
            <person name="Chanda S."/>
            <person name="Ahlenius H."/>
            <person name="Perotti N."/>
            <person name="Zhou B."/>
            <person name="Grieder S.D."/>
            <person name="Ge X."/>
            <person name="Drake S."/>
            <person name="Euong Ang C."/>
            <person name="Walker B.M."/>
            <person name="Vierbuchen T."/>
            <person name="Fuentes D.R."/>
            <person name="Brennecke P."/>
            <person name="Nitta K.R."/>
            <person name="Jolma A."/>
            <person name="Steinmetz L.M."/>
            <person name="Taipale J."/>
            <person name="Suedhof T.C."/>
            <person name="Wernig M."/>
        </authorList>
    </citation>
    <scope>FUNCTION</scope>
    <scope>SUBCELLULAR LOCATION</scope>
    <scope>DNA-BINDING</scope>
    <scope>INTERACTION WITH SIN3B</scope>
</reference>
<keyword id="KW-0025">Alternative splicing</keyword>
<keyword id="KW-0158">Chromosome</keyword>
<keyword id="KW-0175">Coiled coil</keyword>
<keyword id="KW-0217">Developmental protein</keyword>
<keyword id="KW-0221">Differentiation</keyword>
<keyword id="KW-0238">DNA-binding</keyword>
<keyword id="KW-0479">Metal-binding</keyword>
<keyword id="KW-0524">Neurogenesis</keyword>
<keyword id="KW-0539">Nucleus</keyword>
<keyword id="KW-0597">Phosphoprotein</keyword>
<keyword id="KW-1185">Reference proteome</keyword>
<keyword id="KW-0677">Repeat</keyword>
<keyword id="KW-0678">Repressor</keyword>
<keyword id="KW-0804">Transcription</keyword>
<keyword id="KW-0805">Transcription regulation</keyword>
<keyword id="KW-0862">Zinc</keyword>
<keyword id="KW-0863">Zinc-finger</keyword>
<accession>P97500</accession>
<accession>A2RRK5</accession>
<accession>D3Z1P7</accession>
<accession>O08996</accession>
<accession>Q33DP0</accession>
<accession>Q8C643</accession>
<accession>Q8C7L4</accession>
<accession>Q8CHB4</accession>
<gene>
    <name evidence="15 17" type="primary">Myt1l</name>
    <name evidence="11" type="synonym">Kiaa1106</name>
    <name evidence="1" type="synonym">Nzf1</name>
    <name evidence="14" type="synonym">Png1</name>
</gene>
<dbReference type="EMBL" id="U86338">
    <property type="protein sequence ID" value="AAC53157.1"/>
    <property type="molecule type" value="mRNA"/>
</dbReference>
<dbReference type="EMBL" id="AF004295">
    <property type="protein sequence ID" value="AAC53457.1"/>
    <property type="status" value="ALT_FRAME"/>
    <property type="molecule type" value="mRNA"/>
</dbReference>
<dbReference type="EMBL" id="AB212898">
    <property type="protein sequence ID" value="BAE48255.1"/>
    <property type="molecule type" value="mRNA"/>
</dbReference>
<dbReference type="EMBL" id="AK049967">
    <property type="protein sequence ID" value="BAC34010.1"/>
    <property type="molecule type" value="mRNA"/>
</dbReference>
<dbReference type="EMBL" id="AK076608">
    <property type="protein sequence ID" value="BAC36413.1"/>
    <property type="molecule type" value="mRNA"/>
</dbReference>
<dbReference type="EMBL" id="AB093283">
    <property type="protein sequence ID" value="BAC41467.1"/>
    <property type="status" value="ALT_INIT"/>
    <property type="molecule type" value="mRNA"/>
</dbReference>
<dbReference type="EMBL" id="AC154318">
    <property type="status" value="NOT_ANNOTATED_CDS"/>
    <property type="molecule type" value="Genomic_DNA"/>
</dbReference>
<dbReference type="EMBL" id="AC154783">
    <property type="status" value="NOT_ANNOTATED_CDS"/>
    <property type="molecule type" value="Genomic_DNA"/>
</dbReference>
<dbReference type="EMBL" id="AC159626">
    <property type="status" value="NOT_ANNOTATED_CDS"/>
    <property type="molecule type" value="Genomic_DNA"/>
</dbReference>
<dbReference type="EMBL" id="AC166936">
    <property type="status" value="NOT_ANNOTATED_CDS"/>
    <property type="molecule type" value="Genomic_DNA"/>
</dbReference>
<dbReference type="EMBL" id="CT025654">
    <property type="status" value="NOT_ANNOTATED_CDS"/>
    <property type="molecule type" value="Genomic_DNA"/>
</dbReference>
<dbReference type="EMBL" id="BC131677">
    <property type="protein sequence ID" value="AAI31678.1"/>
    <property type="molecule type" value="mRNA"/>
</dbReference>
<dbReference type="CCDS" id="CCDS49041.1">
    <molecule id="P97500-2"/>
</dbReference>
<dbReference type="CCDS" id="CCDS49042.1">
    <molecule id="P97500-1"/>
</dbReference>
<dbReference type="PIR" id="T30189">
    <property type="entry name" value="T30189"/>
</dbReference>
<dbReference type="PIR" id="T46608">
    <property type="entry name" value="T46608"/>
</dbReference>
<dbReference type="RefSeq" id="NP_001087244.1">
    <molecule id="P97500-1"/>
    <property type="nucleotide sequence ID" value="NM_001093775.1"/>
</dbReference>
<dbReference type="RefSeq" id="NP_001087245.1">
    <molecule id="P97500-2"/>
    <property type="nucleotide sequence ID" value="NM_001093776.1"/>
</dbReference>
<dbReference type="RefSeq" id="NP_001348585.1">
    <molecule id="P97500-2"/>
    <property type="nucleotide sequence ID" value="NM_001361656.1"/>
</dbReference>
<dbReference type="RefSeq" id="NP_001348586.1">
    <molecule id="P97500-2"/>
    <property type="nucleotide sequence ID" value="NM_001361657.1"/>
</dbReference>
<dbReference type="RefSeq" id="NP_032692.2">
    <molecule id="P97500-2"/>
    <property type="nucleotide sequence ID" value="NM_008666.3"/>
</dbReference>
<dbReference type="RefSeq" id="XP_011242129.1">
    <molecule id="P97500-1"/>
    <property type="nucleotide sequence ID" value="XM_011243827.4"/>
</dbReference>
<dbReference type="RefSeq" id="XP_011242131.1">
    <property type="nucleotide sequence ID" value="XM_011243829.2"/>
</dbReference>
<dbReference type="RefSeq" id="XP_017170459.1">
    <property type="nucleotide sequence ID" value="XM_017314970.1"/>
</dbReference>
<dbReference type="RefSeq" id="XP_030102447.1">
    <molecule id="P97500-2"/>
    <property type="nucleotide sequence ID" value="XM_030246587.2"/>
</dbReference>
<dbReference type="RefSeq" id="XP_036013104.1">
    <molecule id="P97500-1"/>
    <property type="nucleotide sequence ID" value="XM_036157211.1"/>
</dbReference>
<dbReference type="RefSeq" id="XP_036013105.1">
    <molecule id="P97500-2"/>
    <property type="nucleotide sequence ID" value="XM_036157212.1"/>
</dbReference>
<dbReference type="SMR" id="P97500"/>
<dbReference type="FunCoup" id="P97500">
    <property type="interactions" value="1560"/>
</dbReference>
<dbReference type="STRING" id="10090.ENSMUSP00000058264"/>
<dbReference type="GlyGen" id="P97500">
    <property type="glycosylation" value="7 sites, 1 N-linked glycan (1 site), 1 O-linked glycan (1 site)"/>
</dbReference>
<dbReference type="iPTMnet" id="P97500"/>
<dbReference type="PhosphoSitePlus" id="P97500"/>
<dbReference type="PaxDb" id="10090-ENSMUSP00000058264"/>
<dbReference type="ProteomicsDB" id="287544">
    <molecule id="P97500-1"/>
</dbReference>
<dbReference type="ProteomicsDB" id="287545">
    <molecule id="P97500-2"/>
</dbReference>
<dbReference type="ProteomicsDB" id="287546">
    <molecule id="P97500-3"/>
</dbReference>
<dbReference type="ProteomicsDB" id="287547">
    <molecule id="P97500-4"/>
</dbReference>
<dbReference type="Antibodypedia" id="62900">
    <property type="antibodies" value="59 antibodies from 25 providers"/>
</dbReference>
<dbReference type="DNASU" id="17933"/>
<dbReference type="Ensembl" id="ENSMUST00000021009.10">
    <molecule id="P97500-2"/>
    <property type="protein sequence ID" value="ENSMUSP00000021009.9"/>
    <property type="gene ID" value="ENSMUSG00000061911.16"/>
</dbReference>
<dbReference type="Ensembl" id="ENSMUST00000049784.17">
    <molecule id="P97500-1"/>
    <property type="protein sequence ID" value="ENSMUSP00000058264.10"/>
    <property type="gene ID" value="ENSMUSG00000061911.16"/>
</dbReference>
<dbReference type="Ensembl" id="ENSMUST00000218198.2">
    <molecule id="P97500-3"/>
    <property type="protein sequence ID" value="ENSMUSP00000151919.2"/>
    <property type="gene ID" value="ENSMUSG00000061911.16"/>
</dbReference>
<dbReference type="Ensembl" id="ENSMUST00000218583.2">
    <molecule id="P97500-2"/>
    <property type="protein sequence ID" value="ENSMUSP00000151588.2"/>
    <property type="gene ID" value="ENSMUSG00000061911.16"/>
</dbReference>
<dbReference type="GeneID" id="17933"/>
<dbReference type="KEGG" id="mmu:17933"/>
<dbReference type="UCSC" id="uc007ngi.1">
    <molecule id="P97500-3"/>
    <property type="organism name" value="mouse"/>
</dbReference>
<dbReference type="AGR" id="MGI:1100511"/>
<dbReference type="CTD" id="23040"/>
<dbReference type="MGI" id="MGI:1100511">
    <property type="gene designation" value="Myt1l"/>
</dbReference>
<dbReference type="VEuPathDB" id="HostDB:ENSMUSG00000061911"/>
<dbReference type="eggNOG" id="KOG3803">
    <property type="taxonomic scope" value="Eukaryota"/>
</dbReference>
<dbReference type="GeneTree" id="ENSGT00940000155671"/>
<dbReference type="InParanoid" id="P97500"/>
<dbReference type="OMA" id="ECYESDA"/>
<dbReference type="OrthoDB" id="10069059at2759"/>
<dbReference type="PhylomeDB" id="P97500"/>
<dbReference type="TreeFam" id="TF317299"/>
<dbReference type="ChiTaRS" id="Myt1l">
    <property type="organism name" value="mouse"/>
</dbReference>
<dbReference type="PRO" id="PR:P97500"/>
<dbReference type="Proteomes" id="UP000000589">
    <property type="component" value="Chromosome 12"/>
</dbReference>
<dbReference type="RNAct" id="P97500">
    <property type="molecule type" value="protein"/>
</dbReference>
<dbReference type="Bgee" id="ENSMUSG00000061911">
    <property type="expression patterns" value="Expressed in caudate-putamen and 161 other cell types or tissues"/>
</dbReference>
<dbReference type="ExpressionAtlas" id="P97500">
    <property type="expression patterns" value="baseline and differential"/>
</dbReference>
<dbReference type="GO" id="GO:0005694">
    <property type="term" value="C:chromosome"/>
    <property type="evidence" value="ECO:0007669"/>
    <property type="project" value="UniProtKB-SubCell"/>
</dbReference>
<dbReference type="GO" id="GO:0005634">
    <property type="term" value="C:nucleus"/>
    <property type="evidence" value="ECO:0000314"/>
    <property type="project" value="UniProtKB"/>
</dbReference>
<dbReference type="GO" id="GO:0050897">
    <property type="term" value="F:cobalt ion binding"/>
    <property type="evidence" value="ECO:0007669"/>
    <property type="project" value="Ensembl"/>
</dbReference>
<dbReference type="GO" id="GO:0001228">
    <property type="term" value="F:DNA-binding transcription activator activity, RNA polymerase II-specific"/>
    <property type="evidence" value="ECO:0007669"/>
    <property type="project" value="Ensembl"/>
</dbReference>
<dbReference type="GO" id="GO:0003700">
    <property type="term" value="F:DNA-binding transcription factor activity"/>
    <property type="evidence" value="ECO:0000314"/>
    <property type="project" value="UniProtKB"/>
</dbReference>
<dbReference type="GO" id="GO:0001227">
    <property type="term" value="F:DNA-binding transcription repressor activity, RNA polymerase II-specific"/>
    <property type="evidence" value="ECO:0000314"/>
    <property type="project" value="UniProtKB"/>
</dbReference>
<dbReference type="GO" id="GO:0140487">
    <property type="term" value="F:metal ion sequestering activity"/>
    <property type="evidence" value="ECO:0007669"/>
    <property type="project" value="Ensembl"/>
</dbReference>
<dbReference type="GO" id="GO:0044323">
    <property type="term" value="F:retinoic acid-responsive element binding"/>
    <property type="evidence" value="ECO:0007669"/>
    <property type="project" value="Ensembl"/>
</dbReference>
<dbReference type="GO" id="GO:0003713">
    <property type="term" value="F:transcription coactivator activity"/>
    <property type="evidence" value="ECO:0007669"/>
    <property type="project" value="Ensembl"/>
</dbReference>
<dbReference type="GO" id="GO:0008270">
    <property type="term" value="F:zinc ion binding"/>
    <property type="evidence" value="ECO:0007669"/>
    <property type="project" value="UniProtKB-KW"/>
</dbReference>
<dbReference type="GO" id="GO:0000122">
    <property type="term" value="P:negative regulation of transcription by RNA polymerase II"/>
    <property type="evidence" value="ECO:0000314"/>
    <property type="project" value="UniProtKB"/>
</dbReference>
<dbReference type="GO" id="GO:0007399">
    <property type="term" value="P:nervous system development"/>
    <property type="evidence" value="ECO:0000314"/>
    <property type="project" value="UniProtKB"/>
</dbReference>
<dbReference type="GO" id="GO:0048666">
    <property type="term" value="P:neuron development"/>
    <property type="evidence" value="ECO:0000314"/>
    <property type="project" value="UniProtKB"/>
</dbReference>
<dbReference type="GO" id="GO:0030182">
    <property type="term" value="P:neuron differentiation"/>
    <property type="evidence" value="ECO:0000314"/>
    <property type="project" value="UniProtKB"/>
</dbReference>
<dbReference type="GO" id="GO:0048663">
    <property type="term" value="P:neuron fate commitment"/>
    <property type="evidence" value="ECO:0000314"/>
    <property type="project" value="UniProtKB"/>
</dbReference>
<dbReference type="GO" id="GO:0048665">
    <property type="term" value="P:neuron fate specification"/>
    <property type="evidence" value="ECO:0000314"/>
    <property type="project" value="UniProtKB"/>
</dbReference>
<dbReference type="GO" id="GO:0006357">
    <property type="term" value="P:regulation of transcription by RNA polymerase II"/>
    <property type="evidence" value="ECO:0000314"/>
    <property type="project" value="UniProtKB"/>
</dbReference>
<dbReference type="FunFam" id="4.10.320.30:FF:000001">
    <property type="entry name" value="Myelin transcription factor 1-like, a"/>
    <property type="match status" value="6"/>
</dbReference>
<dbReference type="Gene3D" id="4.10.320.30">
    <property type="match status" value="6"/>
</dbReference>
<dbReference type="InterPro" id="IPR013681">
    <property type="entry name" value="Myelin_TF"/>
</dbReference>
<dbReference type="InterPro" id="IPR002515">
    <property type="entry name" value="Znf_C2H2C"/>
</dbReference>
<dbReference type="InterPro" id="IPR036060">
    <property type="entry name" value="Znf_C2H2C_sf"/>
</dbReference>
<dbReference type="PANTHER" id="PTHR10816:SF15">
    <property type="entry name" value="MYELIN TRANSCRIPTION FACTOR 1-LIKE PROTEIN"/>
    <property type="match status" value="1"/>
</dbReference>
<dbReference type="PANTHER" id="PTHR10816">
    <property type="entry name" value="MYELIN TRANSCRIPTION FACTOR 1-RELATED"/>
    <property type="match status" value="1"/>
</dbReference>
<dbReference type="Pfam" id="PF08474">
    <property type="entry name" value="MYT1"/>
    <property type="match status" value="1"/>
</dbReference>
<dbReference type="Pfam" id="PF01530">
    <property type="entry name" value="zf-C2HC"/>
    <property type="match status" value="6"/>
</dbReference>
<dbReference type="SUPFAM" id="SSF103637">
    <property type="entry name" value="CCHHC domain"/>
    <property type="match status" value="6"/>
</dbReference>
<dbReference type="PROSITE" id="PS51802">
    <property type="entry name" value="ZF_CCHHC"/>
    <property type="match status" value="6"/>
</dbReference>
<organism>
    <name type="scientific">Mus musculus</name>
    <name type="common">Mouse</name>
    <dbReference type="NCBI Taxonomy" id="10090"/>
    <lineage>
        <taxon>Eukaryota</taxon>
        <taxon>Metazoa</taxon>
        <taxon>Chordata</taxon>
        <taxon>Craniata</taxon>
        <taxon>Vertebrata</taxon>
        <taxon>Euteleostomi</taxon>
        <taxon>Mammalia</taxon>
        <taxon>Eutheria</taxon>
        <taxon>Euarchontoglires</taxon>
        <taxon>Glires</taxon>
        <taxon>Rodentia</taxon>
        <taxon>Myomorpha</taxon>
        <taxon>Muroidea</taxon>
        <taxon>Muridae</taxon>
        <taxon>Murinae</taxon>
        <taxon>Mus</taxon>
        <taxon>Mus</taxon>
    </lineage>
</organism>
<comment type="function">
    <text evidence="5 6 7 8 9 10">Transcription factor that plays a key role in neuronal differentiation by specifically repressing expression of non-neuronal genes during neuron differentiation (PubMed:28379941). In contrast to other transcription repressors that inhibit specific lineages, mediates repression of multiple differentiation programs (PubMed:28379941). Also represses expression of negative regulators of neurogenesis, such as members of the Notch signaling pathway, including HES1 (PubMed:28379941). The combination of three transcription factors, ASCL1, POU3F2/BRN2 and MYT1L, is sufficient to reprogram fibroblasts and other somatic cells into induced neuronal (iN) cells in vitro (PubMed:20107439, PubMed:24243019, PubMed:27281220). Directly binds the 5'-AAGTT-3' core motif present on the promoter of target genes and represses transcription by recruiting a multiprotein complex containing SIN3B (PubMed:28379941). The 5'-AAGTT-3' core motif is absent from the promoter of neural genes (PubMed:28379941).</text>
</comment>
<comment type="subunit">
    <text evidence="8">Interacts with SIN3B.</text>
</comment>
<comment type="subcellular location">
    <subcellularLocation>
        <location evidence="6 8 10">Nucleus</location>
    </subcellularLocation>
    <subcellularLocation>
        <location evidence="8">Chromosome</location>
    </subcellularLocation>
    <text evidence="8">Preferentially binds to DNA binding sites that are in an open chromatin configuration (PubMed:28379941).</text>
</comment>
<comment type="alternative products">
    <event type="alternative splicing"/>
    <isoform>
        <id>P97500-1</id>
        <name>1</name>
        <sequence type="displayed"/>
    </isoform>
    <isoform>
        <id>P97500-2</id>
        <name>2</name>
        <sequence type="described" ref="VSP_015728"/>
    </isoform>
    <isoform>
        <id>P97500-3</id>
        <name>3</name>
        <sequence type="described" ref="VSP_015726 VSP_015729 VSP_015730 VSP_015731"/>
    </isoform>
    <isoform>
        <id>P97500-4</id>
        <name>4</name>
        <sequence type="described" ref="VSP_015727 VSP_015728 VSP_015730 VSP_015731"/>
    </isoform>
</comment>
<comment type="tissue specificity">
    <text evidence="9">Brain.</text>
</comment>
<comment type="developmental stage">
    <text evidence="9">Expression is restricted to and present throughout the embryonic CNS and developing peripheral neural structures. In the embryonic CNS, expression is restricted to postmitotic neuronal regions. During the neurogenetic period (11 dpc-17 dpc) expression is associated temporally and spatially with the known generation of the first cortical neurons with known gradients of neuron production. Expression continues in developing postmitotic cortical neurons throughout embryonic development and is expressed within 2 days of neuronal induction in P19 cells.</text>
</comment>
<comment type="induction">
    <text evidence="9">Up-regulated by retinoic acid.</text>
</comment>
<comment type="similarity">
    <text evidence="16">Belongs to the MYT1 family.</text>
</comment>
<comment type="sequence caution" evidence="16">
    <conflict type="frameshift">
        <sequence resource="EMBL-CDS" id="AAC53457"/>
    </conflict>
</comment>
<comment type="sequence caution" evidence="16">
    <conflict type="erroneous initiation">
        <sequence resource="EMBL-CDS" id="BAC41467"/>
    </conflict>
</comment>
<feature type="chain" id="PRO_0000096674" description="Myelin transcription factor 1-like protein">
    <location>
        <begin position="1"/>
        <end position="1187"/>
    </location>
</feature>
<feature type="zinc finger region" description="CCHHC-type 1" evidence="3">
    <location>
        <begin position="22"/>
        <end position="65"/>
    </location>
</feature>
<feature type="zinc finger region" description="CCHHC-type 2" evidence="3">
    <location>
        <begin position="498"/>
        <end position="541"/>
    </location>
</feature>
<feature type="zinc finger region" description="CCHHC-type 3" evidence="3">
    <location>
        <begin position="542"/>
        <end position="585"/>
    </location>
</feature>
<feature type="zinc finger region" description="CCHHC-type 4" evidence="3">
    <location>
        <begin position="897"/>
        <end position="940"/>
    </location>
</feature>
<feature type="zinc finger region" description="CCHHC-type 5" evidence="3">
    <location>
        <begin position="946"/>
        <end position="989"/>
    </location>
</feature>
<feature type="zinc finger region" description="CCHHC-type 6" evidence="3">
    <location>
        <begin position="999"/>
        <end position="1042"/>
    </location>
</feature>
<feature type="region of interest" description="Disordered" evidence="4">
    <location>
        <begin position="1"/>
        <end position="22"/>
    </location>
</feature>
<feature type="region of interest" description="Disordered" evidence="4">
    <location>
        <begin position="56"/>
        <end position="178"/>
    </location>
</feature>
<feature type="region of interest" description="Disordered" evidence="4">
    <location>
        <begin position="221"/>
        <end position="248"/>
    </location>
</feature>
<feature type="region of interest" description="Disordered" evidence="4">
    <location>
        <begin position="343"/>
        <end position="422"/>
    </location>
</feature>
<feature type="region of interest" description="Disordered" evidence="4">
    <location>
        <begin position="450"/>
        <end position="514"/>
    </location>
</feature>
<feature type="region of interest" description="Disordered" evidence="4">
    <location>
        <begin position="686"/>
        <end position="710"/>
    </location>
</feature>
<feature type="coiled-coil region" evidence="2">
    <location>
        <begin position="1058"/>
        <end position="1132"/>
    </location>
</feature>
<feature type="compositionally biased region" description="Acidic residues" evidence="4">
    <location>
        <begin position="89"/>
        <end position="172"/>
    </location>
</feature>
<feature type="compositionally biased region" description="Polar residues" evidence="4">
    <location>
        <begin position="344"/>
        <end position="358"/>
    </location>
</feature>
<feature type="compositionally biased region" description="Basic and acidic residues" evidence="4">
    <location>
        <begin position="362"/>
        <end position="377"/>
    </location>
</feature>
<feature type="compositionally biased region" description="Basic and acidic residues" evidence="4">
    <location>
        <begin position="401"/>
        <end position="412"/>
    </location>
</feature>
<feature type="compositionally biased region" description="Basic and acidic residues" evidence="4">
    <location>
        <begin position="450"/>
        <end position="488"/>
    </location>
</feature>
<feature type="compositionally biased region" description="Basic and acidic residues" evidence="4">
    <location>
        <begin position="496"/>
        <end position="506"/>
    </location>
</feature>
<feature type="binding site" evidence="3">
    <location>
        <position position="31"/>
    </location>
    <ligand>
        <name>Zn(2+)</name>
        <dbReference type="ChEBI" id="CHEBI:29105"/>
        <label>1</label>
    </ligand>
</feature>
<feature type="binding site" evidence="3">
    <location>
        <position position="36"/>
    </location>
    <ligand>
        <name>Zn(2+)</name>
        <dbReference type="ChEBI" id="CHEBI:29105"/>
        <label>1</label>
    </ligand>
</feature>
<feature type="binding site" evidence="3">
    <location>
        <position position="49"/>
    </location>
    <ligand>
        <name>Zn(2+)</name>
        <dbReference type="ChEBI" id="CHEBI:29105"/>
        <label>1</label>
    </ligand>
</feature>
<feature type="binding site" evidence="3">
    <location>
        <position position="55"/>
    </location>
    <ligand>
        <name>Zn(2+)</name>
        <dbReference type="ChEBI" id="CHEBI:29105"/>
        <label>1</label>
    </ligand>
</feature>
<feature type="binding site" evidence="3">
    <location>
        <position position="507"/>
    </location>
    <ligand>
        <name>Zn(2+)</name>
        <dbReference type="ChEBI" id="CHEBI:29105"/>
        <label>2</label>
    </ligand>
</feature>
<feature type="binding site" evidence="3">
    <location>
        <position position="512"/>
    </location>
    <ligand>
        <name>Zn(2+)</name>
        <dbReference type="ChEBI" id="CHEBI:29105"/>
        <label>2</label>
    </ligand>
</feature>
<feature type="binding site" evidence="3">
    <location>
        <position position="525"/>
    </location>
    <ligand>
        <name>Zn(2+)</name>
        <dbReference type="ChEBI" id="CHEBI:29105"/>
        <label>2</label>
    </ligand>
</feature>
<feature type="binding site" evidence="3">
    <location>
        <position position="531"/>
    </location>
    <ligand>
        <name>Zn(2+)</name>
        <dbReference type="ChEBI" id="CHEBI:29105"/>
        <label>2</label>
    </ligand>
</feature>
<feature type="binding site" evidence="3">
    <location>
        <position position="551"/>
    </location>
    <ligand>
        <name>Zn(2+)</name>
        <dbReference type="ChEBI" id="CHEBI:29105"/>
        <label>3</label>
    </ligand>
</feature>
<feature type="binding site" evidence="3">
    <location>
        <position position="556"/>
    </location>
    <ligand>
        <name>Zn(2+)</name>
        <dbReference type="ChEBI" id="CHEBI:29105"/>
        <label>3</label>
    </ligand>
</feature>
<feature type="binding site" evidence="3">
    <location>
        <position position="569"/>
    </location>
    <ligand>
        <name>Zn(2+)</name>
        <dbReference type="ChEBI" id="CHEBI:29105"/>
        <label>3</label>
    </ligand>
</feature>
<feature type="binding site" evidence="3">
    <location>
        <position position="575"/>
    </location>
    <ligand>
        <name>Zn(2+)</name>
        <dbReference type="ChEBI" id="CHEBI:29105"/>
        <label>3</label>
    </ligand>
</feature>
<feature type="binding site" evidence="3">
    <location>
        <position position="906"/>
    </location>
    <ligand>
        <name>Zn(2+)</name>
        <dbReference type="ChEBI" id="CHEBI:29105"/>
        <label>4</label>
    </ligand>
</feature>
<feature type="binding site" evidence="3">
    <location>
        <position position="911"/>
    </location>
    <ligand>
        <name>Zn(2+)</name>
        <dbReference type="ChEBI" id="CHEBI:29105"/>
        <label>4</label>
    </ligand>
</feature>
<feature type="binding site" evidence="3">
    <location>
        <position position="924"/>
    </location>
    <ligand>
        <name>Zn(2+)</name>
        <dbReference type="ChEBI" id="CHEBI:29105"/>
        <label>4</label>
    </ligand>
</feature>
<feature type="binding site" evidence="3">
    <location>
        <position position="930"/>
    </location>
    <ligand>
        <name>Zn(2+)</name>
        <dbReference type="ChEBI" id="CHEBI:29105"/>
        <label>4</label>
    </ligand>
</feature>
<feature type="binding site" evidence="3">
    <location>
        <position position="955"/>
    </location>
    <ligand>
        <name>Zn(2+)</name>
        <dbReference type="ChEBI" id="CHEBI:29105"/>
        <label>5</label>
    </ligand>
</feature>
<feature type="binding site" evidence="3">
    <location>
        <position position="960"/>
    </location>
    <ligand>
        <name>Zn(2+)</name>
        <dbReference type="ChEBI" id="CHEBI:29105"/>
        <label>5</label>
    </ligand>
</feature>
<feature type="binding site" evidence="3">
    <location>
        <position position="973"/>
    </location>
    <ligand>
        <name>Zn(2+)</name>
        <dbReference type="ChEBI" id="CHEBI:29105"/>
        <label>5</label>
    </ligand>
</feature>
<feature type="binding site" evidence="3">
    <location>
        <position position="979"/>
    </location>
    <ligand>
        <name>Zn(2+)</name>
        <dbReference type="ChEBI" id="CHEBI:29105"/>
        <label>5</label>
    </ligand>
</feature>
<feature type="binding site" evidence="3">
    <location>
        <position position="1008"/>
    </location>
    <ligand>
        <name>Zn(2+)</name>
        <dbReference type="ChEBI" id="CHEBI:29105"/>
        <label>6</label>
    </ligand>
</feature>
<feature type="binding site" evidence="3">
    <location>
        <position position="1013"/>
    </location>
    <ligand>
        <name>Zn(2+)</name>
        <dbReference type="ChEBI" id="CHEBI:29105"/>
        <label>6</label>
    </ligand>
</feature>
<feature type="binding site" evidence="3">
    <location>
        <position position="1026"/>
    </location>
    <ligand>
        <name>Zn(2+)</name>
        <dbReference type="ChEBI" id="CHEBI:29105"/>
        <label>6</label>
    </ligand>
</feature>
<feature type="binding site" evidence="3">
    <location>
        <position position="1032"/>
    </location>
    <ligand>
        <name>Zn(2+)</name>
        <dbReference type="ChEBI" id="CHEBI:29105"/>
        <label>6</label>
    </ligand>
</feature>
<feature type="modified residue" description="Phosphoserine" evidence="18">
    <location>
        <position position="251"/>
    </location>
</feature>
<feature type="splice variant" id="VSP_015726" description="In isoform 3." evidence="13">
    <location>
        <begin position="1"/>
        <end position="597"/>
    </location>
</feature>
<feature type="splice variant" id="VSP_015727" description="In isoform 4." evidence="13">
    <location>
        <begin position="1"/>
        <end position="426"/>
    </location>
</feature>
<feature type="splice variant" id="VSP_015728" description="In isoform 2 and isoform 4." evidence="11 12 13 15">
    <location>
        <begin position="494"/>
        <end position="495"/>
    </location>
</feature>
<feature type="splice variant" id="VSP_015729" description="In isoform 3." evidence="13">
    <original>SNQASDRV</original>
    <variation>MTNRQYFP</variation>
    <location>
        <begin position="598"/>
        <end position="605"/>
    </location>
</feature>
<feature type="splice variant" id="VSP_015730" description="In isoform 3 and isoform 4." evidence="13">
    <original>CPTPGCDGSGHITGNYASHR</original>
    <variation>LPVQGPSAIDHLLMFSDFLN</variation>
    <location>
        <begin position="906"/>
        <end position="925"/>
    </location>
</feature>
<feature type="splice variant" id="VSP_015731" description="In isoform 3 and isoform 4." evidence="13">
    <location>
        <begin position="926"/>
        <end position="1187"/>
    </location>
</feature>
<feature type="sequence conflict" description="In Ref. 2; AAC53457." evidence="16" ref="2">
    <original>AI</original>
    <variation>L</variation>
    <location>
        <begin position="24"/>
        <end position="25"/>
    </location>
</feature>
<feature type="sequence conflict" description="In Ref. 2; AAC53457." evidence="16" ref="2">
    <original>M</original>
    <variation>V</variation>
    <location>
        <position position="99"/>
    </location>
</feature>
<feature type="sequence conflict" description="In Ref. 1; AAC53157." evidence="16" ref="1">
    <original>D</original>
    <variation>AS</variation>
    <location>
        <position position="127"/>
    </location>
</feature>
<feature type="sequence conflict" description="In Ref. 1; AAC53157, 2; AAC53457, 3; BAE48255, 5; BAC41467 and 7; AAI31678." ref="1 2 3 5 7">
    <original>E</original>
    <variation>D</variation>
    <location>
        <position position="141"/>
    </location>
</feature>
<feature type="sequence conflict" description="In Ref. 2; AAC53457." evidence="16" ref="2">
    <location>
        <position position="172"/>
    </location>
</feature>
<feature type="sequence conflict" description="In Ref. 2; AAC53457." evidence="16" ref="2">
    <original>L</original>
    <variation>S</variation>
    <location>
        <position position="269"/>
    </location>
</feature>
<feature type="sequence conflict" description="In Ref. 2; AAC53457." evidence="16" ref="2">
    <original>K</original>
    <variation>R</variation>
    <location>
        <position position="305"/>
    </location>
</feature>
<feature type="sequence conflict" description="In Ref. 2; AAC53457." evidence="16" ref="2">
    <original>V</original>
    <variation>A</variation>
    <location>
        <position position="323"/>
    </location>
</feature>
<feature type="sequence conflict" description="In Ref. 4; BAC34010." evidence="16" ref="4">
    <original>T</original>
    <variation>N</variation>
    <location>
        <position position="515"/>
    </location>
</feature>
<feature type="sequence conflict" description="In Ref. 4; BAC34010." evidence="16" ref="4">
    <original>N</original>
    <variation>K</variation>
    <location>
        <position position="650"/>
    </location>
</feature>
<feature type="sequence conflict" description="In Ref. 3; BAE48255 and 4; BAC34010/BAC36413." ref="3 4">
    <original>S</original>
    <variation>N</variation>
    <location>
        <position position="806"/>
    </location>
</feature>
<feature type="sequence conflict" description="In Ref. 2; AAC53457." evidence="16" ref="2">
    <original>E</original>
    <variation>G</variation>
    <location>
        <position position="1072"/>
    </location>
</feature>
<protein>
    <recommendedName>
        <fullName evidence="15">Myelin transcription factor 1-like protein</fullName>
        <shortName evidence="15">MyT1-L</shortName>
        <shortName evidence="15">MyT1L</shortName>
    </recommendedName>
    <alternativeName>
        <fullName evidence="1">Neural zinc finger factor 1</fullName>
        <shortName evidence="1">NZF-1</shortName>
    </alternativeName>
    <alternativeName>
        <fullName evidence="14">Postmitotic neural gene 1 protein</fullName>
    </alternativeName>
    <alternativeName>
        <fullName evidence="14">Zinc finger protein Png-1</fullName>
    </alternativeName>
</protein>
<proteinExistence type="evidence at protein level"/>
<evidence type="ECO:0000250" key="1">
    <source>
        <dbReference type="UniProtKB" id="P70475"/>
    </source>
</evidence>
<evidence type="ECO:0000255" key="2"/>
<evidence type="ECO:0000255" key="3">
    <source>
        <dbReference type="PROSITE-ProRule" id="PRU01143"/>
    </source>
</evidence>
<evidence type="ECO:0000256" key="4">
    <source>
        <dbReference type="SAM" id="MobiDB-lite"/>
    </source>
</evidence>
<evidence type="ECO:0000269" key="5">
    <source>
    </source>
</evidence>
<evidence type="ECO:0000269" key="6">
    <source>
    </source>
</evidence>
<evidence type="ECO:0000269" key="7">
    <source>
    </source>
</evidence>
<evidence type="ECO:0000269" key="8">
    <source>
    </source>
</evidence>
<evidence type="ECO:0000269" key="9">
    <source>
    </source>
</evidence>
<evidence type="ECO:0000269" key="10">
    <source>
    </source>
</evidence>
<evidence type="ECO:0000303" key="11">
    <source>
    </source>
</evidence>
<evidence type="ECO:0000303" key="12">
    <source>
    </source>
</evidence>
<evidence type="ECO:0000303" key="13">
    <source>
    </source>
</evidence>
<evidence type="ECO:0000303" key="14">
    <source>
    </source>
</evidence>
<evidence type="ECO:0000303" key="15">
    <source>
    </source>
</evidence>
<evidence type="ECO:0000305" key="16"/>
<evidence type="ECO:0000312" key="17">
    <source>
        <dbReference type="MGI" id="MGI:1100511"/>
    </source>
</evidence>
<evidence type="ECO:0007744" key="18">
    <source>
    </source>
</evidence>
<sequence length="1187" mass="132945">MDVDSEEKRHRTRSKGVRVPVEPAIQELFSCPTPGCDGSGHVSGKYARHRSVYGCPLAKKRKTQDKQPQEPAPKRKPFAVKADSSSVDECYESDGTEDMDDKEEDDDEEFSEDNDEQGDDDDEDEVDREDEEEIEEEDDEEDDDDEDGDDVEEEEEDDDEEEEEEEEEEENEDHQMSCTRIMQDTDKDDNNNDEYDNYDELVAKSLLNLGKIAEDAAYRARTESEMNSNTSNSLEDDSDKNENLGRKSELSLDLDSDVVRETVDSLKLLAQGHGVVLSENISDRSYAEGMSQQDSRNMNYVMLGKPMNNGLMEKMVEESDEEVCLSSLECLRNQCFDLARKLSETNPQDRSQPPNMSVRQHVRQEDDFPGRTPDRSYSDMMNLMRLEEQLSPRSRTFSSCAKEDGCHERDDDTTSVNSDRSEEVFDMTKGNLTLLEKAIALETERAKAMREKMAMDAGRRDNLRSYEDQSPRQLAGEDRKSKSSDSHVKKPYYGKDPSRTEKRESKCPTPGCDGTGHVTGLYPHHRSLSGCPHKDRVPPEILAMHENVLKCPTPGCTGRGHVNSNRNSHRSLSGCPIAAAEKLAKAQEKHQSCDVSKSNQASDRVLRPMCFVKQLEIPQYGYRNNVPTTTPRSNLAKELEKYSKTSFEYNSYDNHTYGKRAIAPKVQTRDISPKGYDDAKRYCKNASPSSSTTSSYAPSSSSNLSCGGGSSASSTCSKSSFDYTHDMEAAHMAATAILNLSTRCREMPQNLSTKPQDLCTARNPDMEVDENGTLDLSMNKQRPRDSCCPVLTPLEPMSPQQQAVMSSRCFQLSEGDCWDLPVDYTKMKPRRVDEDEPKEITPEDLDPFQEALEERRYPGEVTIPSPKPKYPQCKESKKDLITLSGCPLADKSIRSMLATSSQELKCPTPGCDGSGHITGNYASHRSLSGCPRAKKSGIRIAQSKEDKEDQEPIRCPVPGCDGQGHITGKYASHRSASGCPLAAKRQKDGYLNGSQFSWKSVKTEGMSCPTPGCDGSGHVSGSFLTHRSLSGCPRATSAMKKAKLSGEQMLTIKQRASNGIENDEEIKQLDEEIKELNESNSQMEADMIKLRTQITTMESNLKTIEEENKVIEQQNESLLHELANLSQSLIHSLANIQLPHMDPINEQNFDAYVTTLTEMYTNQDRYQSPENKALLENIKQAVRGIQV</sequence>
<name>MYT1L_MOUSE</name>